<dbReference type="EMBL" id="CT573213">
    <property type="protein sequence ID" value="CAJ60852.1"/>
    <property type="status" value="ALT_INIT"/>
    <property type="molecule type" value="Genomic_DNA"/>
</dbReference>
<dbReference type="RefSeq" id="WP_041939075.1">
    <property type="nucleotide sequence ID" value="NC_008278.1"/>
</dbReference>
<dbReference type="SMR" id="Q0RNN4"/>
<dbReference type="STRING" id="326424.FRAAL2203"/>
<dbReference type="KEGG" id="fal:FRAAL2203"/>
<dbReference type="eggNOG" id="COG1799">
    <property type="taxonomic scope" value="Bacteria"/>
</dbReference>
<dbReference type="HOGENOM" id="CLU_078499_0_0_11"/>
<dbReference type="OrthoDB" id="3731101at2"/>
<dbReference type="Proteomes" id="UP000000657">
    <property type="component" value="Chromosome"/>
</dbReference>
<dbReference type="GO" id="GO:0005737">
    <property type="term" value="C:cytoplasm"/>
    <property type="evidence" value="ECO:0007669"/>
    <property type="project" value="UniProtKB-SubCell"/>
</dbReference>
<dbReference type="GO" id="GO:0000917">
    <property type="term" value="P:division septum assembly"/>
    <property type="evidence" value="ECO:0007669"/>
    <property type="project" value="UniProtKB-KW"/>
</dbReference>
<dbReference type="GO" id="GO:0043093">
    <property type="term" value="P:FtsZ-dependent cytokinesis"/>
    <property type="evidence" value="ECO:0007669"/>
    <property type="project" value="UniProtKB-UniRule"/>
</dbReference>
<dbReference type="Gene3D" id="3.30.110.150">
    <property type="entry name" value="SepF-like protein"/>
    <property type="match status" value="1"/>
</dbReference>
<dbReference type="HAMAP" id="MF_01197">
    <property type="entry name" value="SepF"/>
    <property type="match status" value="1"/>
</dbReference>
<dbReference type="InterPro" id="IPR023052">
    <property type="entry name" value="Cell_div_SepF"/>
</dbReference>
<dbReference type="InterPro" id="IPR007561">
    <property type="entry name" value="Cell_div_SepF/SepF-rel"/>
</dbReference>
<dbReference type="InterPro" id="IPR038594">
    <property type="entry name" value="SepF-like_sf"/>
</dbReference>
<dbReference type="PANTHER" id="PTHR35798">
    <property type="entry name" value="CELL DIVISION PROTEIN SEPF"/>
    <property type="match status" value="1"/>
</dbReference>
<dbReference type="PANTHER" id="PTHR35798:SF1">
    <property type="entry name" value="CELL DIVISION PROTEIN SEPF"/>
    <property type="match status" value="1"/>
</dbReference>
<dbReference type="Pfam" id="PF04472">
    <property type="entry name" value="SepF"/>
    <property type="match status" value="1"/>
</dbReference>
<proteinExistence type="inferred from homology"/>
<keyword id="KW-0131">Cell cycle</keyword>
<keyword id="KW-0132">Cell division</keyword>
<keyword id="KW-0963">Cytoplasm</keyword>
<keyword id="KW-1185">Reference proteome</keyword>
<keyword id="KW-0717">Septation</keyword>
<sequence length="181" mass="20777">MGLGRRAMVYLGLAEEDEDYLDDDDYDDGRAVGHDDRRAMHEPVPMDRTVRRIDAREEPVAMPRRPPVEPLRPAGPVPMRRVMPVEETHPYRITTLQPRSYNEARQIGEEFRDGTPVIMNLTDMDDVDAKRLVDFAAGLIFGLRGDIEKVTNKVFLLSPHNVEVTETDKRRIREGGFYNQS</sequence>
<gene>
    <name evidence="1" type="primary">sepF</name>
    <name type="ordered locus">FRAAL2203</name>
</gene>
<organism>
    <name type="scientific">Frankia alni (strain DSM 45986 / CECT 9034 / ACN14a)</name>
    <dbReference type="NCBI Taxonomy" id="326424"/>
    <lineage>
        <taxon>Bacteria</taxon>
        <taxon>Bacillati</taxon>
        <taxon>Actinomycetota</taxon>
        <taxon>Actinomycetes</taxon>
        <taxon>Frankiales</taxon>
        <taxon>Frankiaceae</taxon>
        <taxon>Frankia</taxon>
    </lineage>
</organism>
<evidence type="ECO:0000255" key="1">
    <source>
        <dbReference type="HAMAP-Rule" id="MF_01197"/>
    </source>
</evidence>
<evidence type="ECO:0000256" key="2">
    <source>
        <dbReference type="SAM" id="MobiDB-lite"/>
    </source>
</evidence>
<evidence type="ECO:0000305" key="3"/>
<comment type="function">
    <text evidence="1">Cell division protein that is part of the divisome complex and is recruited early to the Z-ring. Probably stimulates Z-ring formation, perhaps through the cross-linking of FtsZ protofilaments. Its function overlaps with FtsA.</text>
</comment>
<comment type="subunit">
    <text evidence="1">Homodimer. Interacts with FtsZ.</text>
</comment>
<comment type="subcellular location">
    <subcellularLocation>
        <location evidence="1">Cytoplasm</location>
    </subcellularLocation>
    <text evidence="1">Localizes to the division site, in a FtsZ-dependent manner.</text>
</comment>
<comment type="similarity">
    <text evidence="1">Belongs to the SepF family.</text>
</comment>
<comment type="sequence caution" evidence="3">
    <conflict type="erroneous initiation">
        <sequence resource="EMBL-CDS" id="CAJ60852"/>
    </conflict>
</comment>
<name>SEPF_FRAAA</name>
<reference key="1">
    <citation type="journal article" date="2007" name="Genome Res.">
        <title>Genome characteristics of facultatively symbiotic Frankia sp. strains reflect host range and host plant biogeography.</title>
        <authorList>
            <person name="Normand P."/>
            <person name="Lapierre P."/>
            <person name="Tisa L.S."/>
            <person name="Gogarten J.P."/>
            <person name="Alloisio N."/>
            <person name="Bagnarol E."/>
            <person name="Bassi C.A."/>
            <person name="Berry A.M."/>
            <person name="Bickhart D.M."/>
            <person name="Choisne N."/>
            <person name="Couloux A."/>
            <person name="Cournoyer B."/>
            <person name="Cruveiller S."/>
            <person name="Daubin V."/>
            <person name="Demange N."/>
            <person name="Francino M.P."/>
            <person name="Goltsman E."/>
            <person name="Huang Y."/>
            <person name="Kopp O.R."/>
            <person name="Labarre L."/>
            <person name="Lapidus A."/>
            <person name="Lavire C."/>
            <person name="Marechal J."/>
            <person name="Martinez M."/>
            <person name="Mastronunzio J.E."/>
            <person name="Mullin B.C."/>
            <person name="Niemann J."/>
            <person name="Pujic P."/>
            <person name="Rawnsley T."/>
            <person name="Rouy Z."/>
            <person name="Schenowitz C."/>
            <person name="Sellstedt A."/>
            <person name="Tavares F."/>
            <person name="Tomkins J.P."/>
            <person name="Vallenet D."/>
            <person name="Valverde C."/>
            <person name="Wall L.G."/>
            <person name="Wang Y."/>
            <person name="Medigue C."/>
            <person name="Benson D.R."/>
        </authorList>
    </citation>
    <scope>NUCLEOTIDE SEQUENCE [LARGE SCALE GENOMIC DNA]</scope>
    <source>
        <strain>DSM 45986 / CECT 9034 / ACN14a</strain>
    </source>
</reference>
<feature type="chain" id="PRO_0000334009" description="Cell division protein SepF">
    <location>
        <begin position="1"/>
        <end position="181"/>
    </location>
</feature>
<feature type="region of interest" description="Disordered" evidence="2">
    <location>
        <begin position="18"/>
        <end position="42"/>
    </location>
</feature>
<feature type="compositionally biased region" description="Acidic residues" evidence="2">
    <location>
        <begin position="18"/>
        <end position="27"/>
    </location>
</feature>
<feature type="compositionally biased region" description="Basic and acidic residues" evidence="2">
    <location>
        <begin position="28"/>
        <end position="42"/>
    </location>
</feature>
<accession>Q0RNN4</accession>
<protein>
    <recommendedName>
        <fullName evidence="1">Cell division protein SepF</fullName>
    </recommendedName>
</protein>